<gene>
    <name evidence="1" type="primary">cdd</name>
    <name type="ordered locus">CKO_00646</name>
</gene>
<protein>
    <recommendedName>
        <fullName evidence="1">Cytidine deaminase</fullName>
        <ecNumber evidence="1">3.5.4.5</ecNumber>
    </recommendedName>
    <alternativeName>
        <fullName evidence="1">Cytidine aminohydrolase</fullName>
        <shortName evidence="1">CDA</shortName>
    </alternativeName>
</protein>
<proteinExistence type="inferred from homology"/>
<name>CDD_CITK8</name>
<organism>
    <name type="scientific">Citrobacter koseri (strain ATCC BAA-895 / CDC 4225-83 / SGSC4696)</name>
    <dbReference type="NCBI Taxonomy" id="290338"/>
    <lineage>
        <taxon>Bacteria</taxon>
        <taxon>Pseudomonadati</taxon>
        <taxon>Pseudomonadota</taxon>
        <taxon>Gammaproteobacteria</taxon>
        <taxon>Enterobacterales</taxon>
        <taxon>Enterobacteriaceae</taxon>
        <taxon>Citrobacter</taxon>
    </lineage>
</organism>
<feature type="chain" id="PRO_1000068947" description="Cytidine deaminase">
    <location>
        <begin position="1"/>
        <end position="294"/>
    </location>
</feature>
<feature type="domain" description="CMP/dCMP-type deaminase 1" evidence="2">
    <location>
        <begin position="48"/>
        <end position="168"/>
    </location>
</feature>
<feature type="domain" description="CMP/dCMP-type deaminase 2" evidence="2">
    <location>
        <begin position="186"/>
        <end position="294"/>
    </location>
</feature>
<feature type="active site" description="Proton donor" evidence="1">
    <location>
        <position position="104"/>
    </location>
</feature>
<feature type="binding site" evidence="1">
    <location>
        <begin position="89"/>
        <end position="91"/>
    </location>
    <ligand>
        <name>substrate</name>
    </ligand>
</feature>
<feature type="binding site" evidence="1">
    <location>
        <position position="102"/>
    </location>
    <ligand>
        <name>Zn(2+)</name>
        <dbReference type="ChEBI" id="CHEBI:29105"/>
        <note>catalytic</note>
    </ligand>
</feature>
<feature type="binding site" evidence="1">
    <location>
        <position position="129"/>
    </location>
    <ligand>
        <name>Zn(2+)</name>
        <dbReference type="ChEBI" id="CHEBI:29105"/>
        <note>catalytic</note>
    </ligand>
</feature>
<feature type="binding site" evidence="1">
    <location>
        <position position="132"/>
    </location>
    <ligand>
        <name>Zn(2+)</name>
        <dbReference type="ChEBI" id="CHEBI:29105"/>
        <note>catalytic</note>
    </ligand>
</feature>
<keyword id="KW-0378">Hydrolase</keyword>
<keyword id="KW-0479">Metal-binding</keyword>
<keyword id="KW-1185">Reference proteome</keyword>
<keyword id="KW-0862">Zinc</keyword>
<accession>A8AE87</accession>
<reference key="1">
    <citation type="submission" date="2007-08" db="EMBL/GenBank/DDBJ databases">
        <authorList>
            <consortium name="The Citrobacter koseri Genome Sequencing Project"/>
            <person name="McClelland M."/>
            <person name="Sanderson E.K."/>
            <person name="Porwollik S."/>
            <person name="Spieth J."/>
            <person name="Clifton W.S."/>
            <person name="Latreille P."/>
            <person name="Courtney L."/>
            <person name="Wang C."/>
            <person name="Pepin K."/>
            <person name="Bhonagiri V."/>
            <person name="Nash W."/>
            <person name="Johnson M."/>
            <person name="Thiruvilangam P."/>
            <person name="Wilson R."/>
        </authorList>
    </citation>
    <scope>NUCLEOTIDE SEQUENCE [LARGE SCALE GENOMIC DNA]</scope>
    <source>
        <strain>ATCC BAA-895 / CDC 4225-83 / SGSC4696</strain>
    </source>
</reference>
<dbReference type="EC" id="3.5.4.5" evidence="1"/>
<dbReference type="EMBL" id="CP000822">
    <property type="protein sequence ID" value="ABV11800.1"/>
    <property type="molecule type" value="Genomic_DNA"/>
</dbReference>
<dbReference type="RefSeq" id="WP_012131624.1">
    <property type="nucleotide sequence ID" value="NC_009792.1"/>
</dbReference>
<dbReference type="SMR" id="A8AE87"/>
<dbReference type="STRING" id="290338.CKO_00646"/>
<dbReference type="GeneID" id="45134866"/>
<dbReference type="KEGG" id="cko:CKO_00646"/>
<dbReference type="HOGENOM" id="CLU_052424_0_0_6"/>
<dbReference type="OrthoDB" id="9795347at2"/>
<dbReference type="Proteomes" id="UP000008148">
    <property type="component" value="Chromosome"/>
</dbReference>
<dbReference type="GO" id="GO:0005829">
    <property type="term" value="C:cytosol"/>
    <property type="evidence" value="ECO:0007669"/>
    <property type="project" value="TreeGrafter"/>
</dbReference>
<dbReference type="GO" id="GO:0004126">
    <property type="term" value="F:cytidine deaminase activity"/>
    <property type="evidence" value="ECO:0007669"/>
    <property type="project" value="UniProtKB-UniRule"/>
</dbReference>
<dbReference type="GO" id="GO:0042802">
    <property type="term" value="F:identical protein binding"/>
    <property type="evidence" value="ECO:0007669"/>
    <property type="project" value="UniProtKB-ARBA"/>
</dbReference>
<dbReference type="GO" id="GO:0008270">
    <property type="term" value="F:zinc ion binding"/>
    <property type="evidence" value="ECO:0007669"/>
    <property type="project" value="UniProtKB-UniRule"/>
</dbReference>
<dbReference type="GO" id="GO:0009972">
    <property type="term" value="P:cytidine deamination"/>
    <property type="evidence" value="ECO:0007669"/>
    <property type="project" value="InterPro"/>
</dbReference>
<dbReference type="CDD" id="cd01283">
    <property type="entry name" value="cytidine_deaminase"/>
    <property type="match status" value="2"/>
</dbReference>
<dbReference type="FunFam" id="3.40.140.10:FF:000006">
    <property type="entry name" value="Cytidine deaminase"/>
    <property type="match status" value="1"/>
</dbReference>
<dbReference type="FunFam" id="3.40.140.10:FF:000007">
    <property type="entry name" value="Cytidine deaminase"/>
    <property type="match status" value="1"/>
</dbReference>
<dbReference type="Gene3D" id="3.40.140.10">
    <property type="entry name" value="Cytidine Deaminase, domain 2"/>
    <property type="match status" value="2"/>
</dbReference>
<dbReference type="HAMAP" id="MF_01558">
    <property type="entry name" value="Cyt_deam"/>
    <property type="match status" value="1"/>
</dbReference>
<dbReference type="InterPro" id="IPR016192">
    <property type="entry name" value="APOBEC/CMP_deaminase_Zn-bd"/>
</dbReference>
<dbReference type="InterPro" id="IPR002125">
    <property type="entry name" value="CMP_dCMP_dom"/>
</dbReference>
<dbReference type="InterPro" id="IPR013171">
    <property type="entry name" value="Cyd/dCyd_deaminase_Zn-bd"/>
</dbReference>
<dbReference type="InterPro" id="IPR050202">
    <property type="entry name" value="Cyt/Deoxycyt_deaminase"/>
</dbReference>
<dbReference type="InterPro" id="IPR006263">
    <property type="entry name" value="Cyt_deam_dimer"/>
</dbReference>
<dbReference type="InterPro" id="IPR016193">
    <property type="entry name" value="Cytidine_deaminase-like"/>
</dbReference>
<dbReference type="InterPro" id="IPR020797">
    <property type="entry name" value="Cytidine_deaminase_bacteria"/>
</dbReference>
<dbReference type="NCBIfam" id="TIGR01355">
    <property type="entry name" value="cyt_deam_dimer"/>
    <property type="match status" value="1"/>
</dbReference>
<dbReference type="NCBIfam" id="NF006537">
    <property type="entry name" value="PRK09027.1"/>
    <property type="match status" value="1"/>
</dbReference>
<dbReference type="PANTHER" id="PTHR11644">
    <property type="entry name" value="CYTIDINE DEAMINASE"/>
    <property type="match status" value="1"/>
</dbReference>
<dbReference type="PANTHER" id="PTHR11644:SF2">
    <property type="entry name" value="CYTIDINE DEAMINASE"/>
    <property type="match status" value="1"/>
</dbReference>
<dbReference type="Pfam" id="PF00383">
    <property type="entry name" value="dCMP_cyt_deam_1"/>
    <property type="match status" value="1"/>
</dbReference>
<dbReference type="Pfam" id="PF08211">
    <property type="entry name" value="dCMP_cyt_deam_2"/>
    <property type="match status" value="1"/>
</dbReference>
<dbReference type="PIRSF" id="PIRSF006334">
    <property type="entry name" value="Cdd_plus_pseudo"/>
    <property type="match status" value="1"/>
</dbReference>
<dbReference type="SUPFAM" id="SSF53927">
    <property type="entry name" value="Cytidine deaminase-like"/>
    <property type="match status" value="2"/>
</dbReference>
<dbReference type="PROSITE" id="PS00903">
    <property type="entry name" value="CYT_DCMP_DEAMINASES_1"/>
    <property type="match status" value="1"/>
</dbReference>
<dbReference type="PROSITE" id="PS51747">
    <property type="entry name" value="CYT_DCMP_DEAMINASES_2"/>
    <property type="match status" value="2"/>
</dbReference>
<sequence>MHPRFQTAFGQLADNLQSALAPILADEHFPAMLTAEQVSTLKRESGLDEDALAFALLPLAAACARTDLSHFNVGAIARGISGTWYFGGNMEFLGATMQQTVHAEQSAIGHAWLRGEKGLAAITVNYTPCGHCRQFMNELNSGLDLRIHLPGRVPHTLRDYLPDAFGPKDLEIKTLLMDEQDHGFALEGDALTQAAIAAANKCHMPYSYSPSGVALECKDGRIFTGSYAENAAFNPTLPPLQGALNLLNLNGYDYPDIQRAILAEKADAPLIQWDATAATLKALGCNNIDRVLLG</sequence>
<evidence type="ECO:0000255" key="1">
    <source>
        <dbReference type="HAMAP-Rule" id="MF_01558"/>
    </source>
</evidence>
<evidence type="ECO:0000255" key="2">
    <source>
        <dbReference type="PROSITE-ProRule" id="PRU01083"/>
    </source>
</evidence>
<comment type="function">
    <text evidence="1">This enzyme scavenges exogenous and endogenous cytidine and 2'-deoxycytidine for UMP synthesis.</text>
</comment>
<comment type="catalytic activity">
    <reaction evidence="1">
        <text>cytidine + H2O + H(+) = uridine + NH4(+)</text>
        <dbReference type="Rhea" id="RHEA:16069"/>
        <dbReference type="ChEBI" id="CHEBI:15377"/>
        <dbReference type="ChEBI" id="CHEBI:15378"/>
        <dbReference type="ChEBI" id="CHEBI:16704"/>
        <dbReference type="ChEBI" id="CHEBI:17562"/>
        <dbReference type="ChEBI" id="CHEBI:28938"/>
        <dbReference type="EC" id="3.5.4.5"/>
    </reaction>
</comment>
<comment type="catalytic activity">
    <reaction evidence="1">
        <text>2'-deoxycytidine + H2O + H(+) = 2'-deoxyuridine + NH4(+)</text>
        <dbReference type="Rhea" id="RHEA:13433"/>
        <dbReference type="ChEBI" id="CHEBI:15377"/>
        <dbReference type="ChEBI" id="CHEBI:15378"/>
        <dbReference type="ChEBI" id="CHEBI:15698"/>
        <dbReference type="ChEBI" id="CHEBI:16450"/>
        <dbReference type="ChEBI" id="CHEBI:28938"/>
        <dbReference type="EC" id="3.5.4.5"/>
    </reaction>
</comment>
<comment type="cofactor">
    <cofactor evidence="1">
        <name>Zn(2+)</name>
        <dbReference type="ChEBI" id="CHEBI:29105"/>
    </cofactor>
    <text evidence="1">Binds 1 zinc ion.</text>
</comment>
<comment type="subunit">
    <text evidence="1">Homodimer.</text>
</comment>
<comment type="similarity">
    <text evidence="1">Belongs to the cytidine and deoxycytidylate deaminase family.</text>
</comment>